<evidence type="ECO:0000255" key="1">
    <source>
        <dbReference type="HAMAP-Rule" id="MF_01045"/>
    </source>
</evidence>
<organism>
    <name type="scientific">Salmonella enteritidis PT4 (strain P125109)</name>
    <dbReference type="NCBI Taxonomy" id="550537"/>
    <lineage>
        <taxon>Bacteria</taxon>
        <taxon>Pseudomonadati</taxon>
        <taxon>Pseudomonadota</taxon>
        <taxon>Gammaproteobacteria</taxon>
        <taxon>Enterobacterales</taxon>
        <taxon>Enterobacteriaceae</taxon>
        <taxon>Salmonella</taxon>
    </lineage>
</organism>
<protein>
    <recommendedName>
        <fullName evidence="1">D-cysteine desulfhydrase</fullName>
        <ecNumber evidence="1">4.4.1.15</ecNumber>
    </recommendedName>
</protein>
<feature type="chain" id="PRO_1000136167" description="D-cysteine desulfhydrase">
    <location>
        <begin position="1"/>
        <end position="328"/>
    </location>
</feature>
<feature type="modified residue" description="N6-(pyridoxal phosphate)lysine" evidence="1">
    <location>
        <position position="51"/>
    </location>
</feature>
<name>DCYD_SALEP</name>
<dbReference type="EC" id="4.4.1.15" evidence="1"/>
<dbReference type="EMBL" id="AM933172">
    <property type="protein sequence ID" value="CAR32639.1"/>
    <property type="molecule type" value="Genomic_DNA"/>
</dbReference>
<dbReference type="RefSeq" id="WP_001128188.1">
    <property type="nucleotide sequence ID" value="NC_011294.1"/>
</dbReference>
<dbReference type="SMR" id="B5R104"/>
<dbReference type="KEGG" id="set:SEN1054"/>
<dbReference type="HOGENOM" id="CLU_048897_1_0_6"/>
<dbReference type="Proteomes" id="UP000000613">
    <property type="component" value="Chromosome"/>
</dbReference>
<dbReference type="GO" id="GO:0019148">
    <property type="term" value="F:D-cysteine desulfhydrase activity"/>
    <property type="evidence" value="ECO:0007669"/>
    <property type="project" value="UniProtKB-UniRule"/>
</dbReference>
<dbReference type="GO" id="GO:0046416">
    <property type="term" value="P:D-amino acid metabolic process"/>
    <property type="evidence" value="ECO:0007669"/>
    <property type="project" value="UniProtKB-UniRule"/>
</dbReference>
<dbReference type="CDD" id="cd06449">
    <property type="entry name" value="ACCD"/>
    <property type="match status" value="1"/>
</dbReference>
<dbReference type="FunFam" id="3.40.50.1100:FF:000019">
    <property type="entry name" value="D-cysteine desulfhydrase"/>
    <property type="match status" value="1"/>
</dbReference>
<dbReference type="Gene3D" id="3.40.50.1100">
    <property type="match status" value="2"/>
</dbReference>
<dbReference type="HAMAP" id="MF_01045">
    <property type="entry name" value="D_Cys_desulfhydr"/>
    <property type="match status" value="1"/>
</dbReference>
<dbReference type="InterPro" id="IPR027278">
    <property type="entry name" value="ACCD_DCysDesulf"/>
</dbReference>
<dbReference type="InterPro" id="IPR005966">
    <property type="entry name" value="D-Cys_desShydrase"/>
</dbReference>
<dbReference type="InterPro" id="IPR023702">
    <property type="entry name" value="D_Cys_desulphydr_bac"/>
</dbReference>
<dbReference type="InterPro" id="IPR001926">
    <property type="entry name" value="TrpB-like_PALP"/>
</dbReference>
<dbReference type="InterPro" id="IPR036052">
    <property type="entry name" value="TrpB-like_PALP_sf"/>
</dbReference>
<dbReference type="NCBIfam" id="TIGR01275">
    <property type="entry name" value="ACC_deam_rel"/>
    <property type="match status" value="1"/>
</dbReference>
<dbReference type="NCBIfam" id="NF003029">
    <property type="entry name" value="PRK03910.1-1"/>
    <property type="match status" value="1"/>
</dbReference>
<dbReference type="NCBIfam" id="NF003030">
    <property type="entry name" value="PRK03910.1-3"/>
    <property type="match status" value="1"/>
</dbReference>
<dbReference type="NCBIfam" id="NF003032">
    <property type="entry name" value="PRK03910.1-5"/>
    <property type="match status" value="1"/>
</dbReference>
<dbReference type="PANTHER" id="PTHR43780">
    <property type="entry name" value="1-AMINOCYCLOPROPANE-1-CARBOXYLATE DEAMINASE-RELATED"/>
    <property type="match status" value="1"/>
</dbReference>
<dbReference type="PANTHER" id="PTHR43780:SF2">
    <property type="entry name" value="1-AMINOCYCLOPROPANE-1-CARBOXYLATE DEAMINASE-RELATED"/>
    <property type="match status" value="1"/>
</dbReference>
<dbReference type="Pfam" id="PF00291">
    <property type="entry name" value="PALP"/>
    <property type="match status" value="1"/>
</dbReference>
<dbReference type="PIRSF" id="PIRSF006278">
    <property type="entry name" value="ACCD_DCysDesulf"/>
    <property type="match status" value="1"/>
</dbReference>
<dbReference type="SUPFAM" id="SSF53686">
    <property type="entry name" value="Tryptophan synthase beta subunit-like PLP-dependent enzymes"/>
    <property type="match status" value="1"/>
</dbReference>
<comment type="function">
    <text evidence="1">Catalyzes the alpha,beta-elimination reaction of D-cysteine and of several D-cysteine derivatives. It could be a defense mechanism against D-cysteine.</text>
</comment>
<comment type="catalytic activity">
    <reaction evidence="1">
        <text>D-cysteine + H2O = hydrogen sulfide + pyruvate + NH4(+) + H(+)</text>
        <dbReference type="Rhea" id="RHEA:11268"/>
        <dbReference type="ChEBI" id="CHEBI:15361"/>
        <dbReference type="ChEBI" id="CHEBI:15377"/>
        <dbReference type="ChEBI" id="CHEBI:15378"/>
        <dbReference type="ChEBI" id="CHEBI:28938"/>
        <dbReference type="ChEBI" id="CHEBI:29919"/>
        <dbReference type="ChEBI" id="CHEBI:35236"/>
        <dbReference type="EC" id="4.4.1.15"/>
    </reaction>
</comment>
<comment type="cofactor">
    <cofactor evidence="1">
        <name>pyridoxal 5'-phosphate</name>
        <dbReference type="ChEBI" id="CHEBI:597326"/>
    </cofactor>
</comment>
<comment type="subunit">
    <text evidence="1">Homodimer.</text>
</comment>
<comment type="similarity">
    <text evidence="1">Belongs to the ACC deaminase/D-cysteine desulfhydrase family.</text>
</comment>
<keyword id="KW-0456">Lyase</keyword>
<keyword id="KW-0663">Pyridoxal phosphate</keyword>
<sequence length="328" mass="34877">MPLHHLTRFPRLELIGAPTPLEYLPRLSDYLGREIYIKRDDVTPIAMGGNKLRKLEFLVADALREGADTLITAGAIQSNHVRQTAAVAAKLGLHCVALLENPIGTTAENYLTNGNRLLLDLFNTQIEMCDALTDPDAQLQTLATRIEAQGFRPYVIPVGGSSALGAMGYVESALEIAQQCEEVVGLSSVVVASGSAGTHAGLAVGLEHLMPDVELIGVTVSRSVAEQKPKVIALQQAIAGQLALTATADIHLWDDYFAPGYGVPNDAGMEAVKLLASLEGVLLDPVYTGKAMAGLIDGISQKRFNDDGPILFIHTGGAPALFAYHPHV</sequence>
<gene>
    <name evidence="1" type="primary">dcyD</name>
    <name type="ordered locus">SEN1054</name>
</gene>
<reference key="1">
    <citation type="journal article" date="2008" name="Genome Res.">
        <title>Comparative genome analysis of Salmonella enteritidis PT4 and Salmonella gallinarum 287/91 provides insights into evolutionary and host adaptation pathways.</title>
        <authorList>
            <person name="Thomson N.R."/>
            <person name="Clayton D.J."/>
            <person name="Windhorst D."/>
            <person name="Vernikos G."/>
            <person name="Davidson S."/>
            <person name="Churcher C."/>
            <person name="Quail M.A."/>
            <person name="Stevens M."/>
            <person name="Jones M.A."/>
            <person name="Watson M."/>
            <person name="Barron A."/>
            <person name="Layton A."/>
            <person name="Pickard D."/>
            <person name="Kingsley R.A."/>
            <person name="Bignell A."/>
            <person name="Clark L."/>
            <person name="Harris B."/>
            <person name="Ormond D."/>
            <person name="Abdellah Z."/>
            <person name="Brooks K."/>
            <person name="Cherevach I."/>
            <person name="Chillingworth T."/>
            <person name="Woodward J."/>
            <person name="Norberczak H."/>
            <person name="Lord A."/>
            <person name="Arrowsmith C."/>
            <person name="Jagels K."/>
            <person name="Moule S."/>
            <person name="Mungall K."/>
            <person name="Saunders M."/>
            <person name="Whitehead S."/>
            <person name="Chabalgoity J.A."/>
            <person name="Maskell D."/>
            <person name="Humphreys T."/>
            <person name="Roberts M."/>
            <person name="Barrow P.A."/>
            <person name="Dougan G."/>
            <person name="Parkhill J."/>
        </authorList>
    </citation>
    <scope>NUCLEOTIDE SEQUENCE [LARGE SCALE GENOMIC DNA]</scope>
    <source>
        <strain>P125109</strain>
    </source>
</reference>
<accession>B5R104</accession>
<proteinExistence type="inferred from homology"/>